<protein>
    <recommendedName>
        <fullName>Protein yellow</fullName>
    </recommendedName>
</protein>
<feature type="signal peptide" evidence="2">
    <location>
        <begin position="1"/>
        <end position="21"/>
    </location>
</feature>
<feature type="chain" id="PRO_0000031051" description="Protein yellow">
    <location>
        <begin position="22"/>
        <end position="541"/>
    </location>
</feature>
<feature type="region of interest" description="Disordered" evidence="3">
    <location>
        <begin position="443"/>
        <end position="463"/>
    </location>
</feature>
<feature type="glycosylation site" description="N-linked (GlcNAc...) asparagine" evidence="2">
    <location>
        <position position="144"/>
    </location>
</feature>
<feature type="glycosylation site" description="N-linked (GlcNAc...) asparagine" evidence="2">
    <location>
        <position position="215"/>
    </location>
</feature>
<gene>
    <name type="primary">y</name>
</gene>
<name>YELL_DROMA</name>
<proteinExistence type="inferred from homology"/>
<keyword id="KW-0325">Glycoprotein</keyword>
<keyword id="KW-0964">Secreted</keyword>
<keyword id="KW-0732">Signal</keyword>
<accession>P62408</accession>
<accession>Q9BH20</accession>
<comment type="function">
    <text evidence="1">Controls the pigmentation pattern of the adult cuticle and larval mouth parts.</text>
</comment>
<comment type="subcellular location">
    <subcellularLocation>
        <location>Secreted</location>
    </subcellularLocation>
</comment>
<comment type="similarity">
    <text evidence="4">Belongs to the major royal jelly protein family.</text>
</comment>
<organism>
    <name type="scientific">Drosophila mauritiana</name>
    <name type="common">Fruit fly</name>
    <dbReference type="NCBI Taxonomy" id="7226"/>
    <lineage>
        <taxon>Eukaryota</taxon>
        <taxon>Metazoa</taxon>
        <taxon>Ecdysozoa</taxon>
        <taxon>Arthropoda</taxon>
        <taxon>Hexapoda</taxon>
        <taxon>Insecta</taxon>
        <taxon>Pterygota</taxon>
        <taxon>Neoptera</taxon>
        <taxon>Endopterygota</taxon>
        <taxon>Diptera</taxon>
        <taxon>Brachycera</taxon>
        <taxon>Muscomorpha</taxon>
        <taxon>Ephydroidea</taxon>
        <taxon>Drosophilidae</taxon>
        <taxon>Drosophila</taxon>
        <taxon>Sophophora</taxon>
    </lineage>
</organism>
<dbReference type="EMBL" id="AJ300669">
    <property type="protein sequence ID" value="CAC34736.1"/>
    <property type="molecule type" value="Genomic_DNA"/>
</dbReference>
<dbReference type="SMR" id="P62408"/>
<dbReference type="GlyCosmos" id="P62408">
    <property type="glycosylation" value="2 sites, No reported glycans"/>
</dbReference>
<dbReference type="EnsemblMetazoa" id="XM_033315737.1">
    <property type="protein sequence ID" value="XP_033171628.1"/>
    <property type="gene ID" value="LOC117148380"/>
</dbReference>
<dbReference type="FlyBase" id="FBgn0014776">
    <property type="gene designation" value="Dmau\y"/>
</dbReference>
<dbReference type="Proteomes" id="UP000515162">
    <property type="component" value="Unplaced"/>
</dbReference>
<dbReference type="GO" id="GO:0005576">
    <property type="term" value="C:extracellular region"/>
    <property type="evidence" value="ECO:0007669"/>
    <property type="project" value="UniProtKB-SubCell"/>
</dbReference>
<dbReference type="FunFam" id="2.120.10.30:FF:000046">
    <property type="entry name" value="Blast:Protein yellow"/>
    <property type="match status" value="1"/>
</dbReference>
<dbReference type="Gene3D" id="2.120.10.30">
    <property type="entry name" value="TolB, C-terminal domain"/>
    <property type="match status" value="1"/>
</dbReference>
<dbReference type="InterPro" id="IPR011042">
    <property type="entry name" value="6-blade_b-propeller_TolB-like"/>
</dbReference>
<dbReference type="InterPro" id="IPR017996">
    <property type="entry name" value="Royal_jelly/protein_yellow"/>
</dbReference>
<dbReference type="PANTHER" id="PTHR10009:SF14">
    <property type="entry name" value="PROTEIN YELLOW"/>
    <property type="match status" value="1"/>
</dbReference>
<dbReference type="PANTHER" id="PTHR10009">
    <property type="entry name" value="PROTEIN YELLOW-RELATED"/>
    <property type="match status" value="1"/>
</dbReference>
<dbReference type="Pfam" id="PF03022">
    <property type="entry name" value="MRJP"/>
    <property type="match status" value="1"/>
</dbReference>
<dbReference type="PRINTS" id="PR01366">
    <property type="entry name" value="ROYALJELLY"/>
</dbReference>
<sequence>MFQDKGWILVTLITLVTPSWAAYKLQERYSWNQLDFAFPNTRLKDQALASGDYIPQNALPVGVEHFGNRLFVTVPRWRDGIPATLTYINMDRSLTGSPELIPYPDWRSNTAGDCANSITTAYRIKVDECGRLWVLDTGTVGIGNTTTNPCPYAVNVFDLTTDTRIRRYELPGVDTNPNTFIANIAVDIGKNCDDAYAYFADELGYGLIAYSWELNKSWRFSAHSYFFPDPLRGDFNVAGINFQWGEEGIFGMSLSPIRSDGYRTLYFSPLASHRQFAVSTRILRDETRTEDSYHDFVALDERGPNSHTTSRVMSDDGIELFNLIDQNAVGCWHSSMPYSPQFHGIVDRDDVGLVFPADVKIDENKNVWVLSDRMPVFLLSDLDYSDTNFRIYTAPLATLIENTVCDLRNNAYGPPNTVSIPKQAVLPMGPPLYTKQYRPLLPQKPQTSWASSPPPPSRTYLPANSGNVVSSISVSTNSVGPAGVEVPKAYIFNQHNGINYETSGPHLFPTHQPAQPGVQDGGLKTYVNARQSGWWHHQHQG</sequence>
<evidence type="ECO:0000250" key="1"/>
<evidence type="ECO:0000255" key="2"/>
<evidence type="ECO:0000256" key="3">
    <source>
        <dbReference type="SAM" id="MobiDB-lite"/>
    </source>
</evidence>
<evidence type="ECO:0000305" key="4"/>
<reference key="1">
    <citation type="journal article" date="2001" name="Mol. Biol. Evol.">
        <title>Changes in the recombinational environment affect divergence in the yellow gene of Drosophila.</title>
        <authorList>
            <person name="Munte A.B."/>
            <person name="Aguade M."/>
            <person name="Segarra C."/>
        </authorList>
    </citation>
    <scope>NUCLEOTIDE SEQUENCE [GENOMIC DNA]</scope>
</reference>